<gene>
    <name type="ordered locus">At5g19240</name>
    <name type="ORF">T24G5.140</name>
</gene>
<feature type="signal peptide" evidence="2">
    <location>
        <begin position="1"/>
        <end position="25"/>
    </location>
</feature>
<feature type="chain" id="PRO_0000036269" description="Uncharacterized GPI-anchored protein At5g19240">
    <location>
        <begin position="26"/>
        <end position="169"/>
    </location>
</feature>
<feature type="propeptide" id="PRO_0000036270" description="Removed in mature form" evidence="2">
    <location>
        <begin position="170"/>
        <end position="199"/>
    </location>
</feature>
<feature type="lipid moiety-binding region" description="GPI-anchor amidated serine" evidence="2">
    <location>
        <position position="169"/>
    </location>
</feature>
<feature type="glycosylation site" description="N-linked (GlcNAc...) asparagine" evidence="2">
    <location>
        <position position="45"/>
    </location>
</feature>
<feature type="glycosylation site" description="N-linked (GlcNAc...) asparagine" evidence="2">
    <location>
        <position position="73"/>
    </location>
</feature>
<feature type="glycosylation site" description="N-linked (GlcNAc...) asparagine" evidence="2">
    <location>
        <position position="102"/>
    </location>
</feature>
<feature type="glycosylation site" description="N-linked (GlcNAc...) asparagine" evidence="2">
    <location>
        <position position="135"/>
    </location>
</feature>
<feature type="sequence conflict" description="In Ref. 4; AAO42835." evidence="3" ref="4">
    <original>F</original>
    <variation>L</variation>
    <location>
        <position position="16"/>
    </location>
</feature>
<feature type="sequence conflict" description="In Ref. 1; AAN60328." evidence="3" ref="1">
    <original>LS</original>
    <variation>IF</variation>
    <location>
        <begin position="17"/>
        <end position="18"/>
    </location>
</feature>
<feature type="sequence conflict" description="In Ref. 1; AAN60328." evidence="3" ref="1">
    <original>HVLSHNSLSLFS</original>
    <variation>LFCFFMF</variation>
    <location>
        <begin position="188"/>
        <end position="199"/>
    </location>
</feature>
<sequence length="199" mass="21335">MAISKLHLVLFLLSVFLSLHRPVLSNTDGENLLFTVFNQYRESVNLTNLKKNKNAECLADEVVDQLQNQPCTNTTGSASVPGTDPGIPNFPNLLAKCRLNTNVTRDGLILQVCAPKHHSTPDLSSFANVLTKNLNDSKFTGAGVGIDSDGIWLVTVLTTNTPGGSYSNSGAFAFGVNGLVSSSLMFLHVLSHNSLSLFS</sequence>
<comment type="subcellular location">
    <subcellularLocation>
        <location evidence="1">Cell membrane</location>
        <topology evidence="1">Lipid-anchor</topology>
        <topology evidence="1">GPI-anchor</topology>
    </subcellularLocation>
</comment>
<comment type="similarity">
    <text evidence="3">Belongs to the UPF0277 family.</text>
</comment>
<name>UGPI2_ARATH</name>
<proteinExistence type="evidence at transcript level"/>
<protein>
    <recommendedName>
        <fullName>Uncharacterized GPI-anchored protein At5g19240</fullName>
    </recommendedName>
</protein>
<accession>Q84VZ5</accession>
<accession>Q8H7A4</accession>
<reference key="1">
    <citation type="submission" date="1998-08" db="EMBL/GenBank/DDBJ databases">
        <title>Signal peptide selection derived cDNAs from Arabidopsis thaliana leaves and guard cells.</title>
        <authorList>
            <person name="Stracke R."/>
            <person name="Palme K."/>
        </authorList>
    </citation>
    <scope>NUCLEOTIDE SEQUENCE [LARGE SCALE MRNA]</scope>
</reference>
<reference key="2">
    <citation type="journal article" date="2000" name="Nature">
        <title>Sequence and analysis of chromosome 5 of the plant Arabidopsis thaliana.</title>
        <authorList>
            <person name="Tabata S."/>
            <person name="Kaneko T."/>
            <person name="Nakamura Y."/>
            <person name="Kotani H."/>
            <person name="Kato T."/>
            <person name="Asamizu E."/>
            <person name="Miyajima N."/>
            <person name="Sasamoto S."/>
            <person name="Kimura T."/>
            <person name="Hosouchi T."/>
            <person name="Kawashima K."/>
            <person name="Kohara M."/>
            <person name="Matsumoto M."/>
            <person name="Matsuno A."/>
            <person name="Muraki A."/>
            <person name="Nakayama S."/>
            <person name="Nakazaki N."/>
            <person name="Naruo K."/>
            <person name="Okumura S."/>
            <person name="Shinpo S."/>
            <person name="Takeuchi C."/>
            <person name="Wada T."/>
            <person name="Watanabe A."/>
            <person name="Yamada M."/>
            <person name="Yasuda M."/>
            <person name="Sato S."/>
            <person name="de la Bastide M."/>
            <person name="Huang E."/>
            <person name="Spiegel L."/>
            <person name="Gnoj L."/>
            <person name="O'Shaughnessy A."/>
            <person name="Preston R."/>
            <person name="Habermann K."/>
            <person name="Murray J."/>
            <person name="Johnson D."/>
            <person name="Rohlfing T."/>
            <person name="Nelson J."/>
            <person name="Stoneking T."/>
            <person name="Pepin K."/>
            <person name="Spieth J."/>
            <person name="Sekhon M."/>
            <person name="Armstrong J."/>
            <person name="Becker M."/>
            <person name="Belter E."/>
            <person name="Cordum H."/>
            <person name="Cordes M."/>
            <person name="Courtney L."/>
            <person name="Courtney W."/>
            <person name="Dante M."/>
            <person name="Du H."/>
            <person name="Edwards J."/>
            <person name="Fryman J."/>
            <person name="Haakensen B."/>
            <person name="Lamar E."/>
            <person name="Latreille P."/>
            <person name="Leonard S."/>
            <person name="Meyer R."/>
            <person name="Mulvaney E."/>
            <person name="Ozersky P."/>
            <person name="Riley A."/>
            <person name="Strowmatt C."/>
            <person name="Wagner-McPherson C."/>
            <person name="Wollam A."/>
            <person name="Yoakum M."/>
            <person name="Bell M."/>
            <person name="Dedhia N."/>
            <person name="Parnell L."/>
            <person name="Shah R."/>
            <person name="Rodriguez M."/>
            <person name="Hoon See L."/>
            <person name="Vil D."/>
            <person name="Baker J."/>
            <person name="Kirchoff K."/>
            <person name="Toth K."/>
            <person name="King L."/>
            <person name="Bahret A."/>
            <person name="Miller B."/>
            <person name="Marra M.A."/>
            <person name="Martienssen R."/>
            <person name="McCombie W.R."/>
            <person name="Wilson R.K."/>
            <person name="Murphy G."/>
            <person name="Bancroft I."/>
            <person name="Volckaert G."/>
            <person name="Wambutt R."/>
            <person name="Duesterhoeft A."/>
            <person name="Stiekema W."/>
            <person name="Pohl T."/>
            <person name="Entian K.-D."/>
            <person name="Terryn N."/>
            <person name="Hartley N."/>
            <person name="Bent E."/>
            <person name="Johnson S."/>
            <person name="Langham S.-A."/>
            <person name="McCullagh B."/>
            <person name="Robben J."/>
            <person name="Grymonprez B."/>
            <person name="Zimmermann W."/>
            <person name="Ramsperger U."/>
            <person name="Wedler H."/>
            <person name="Balke K."/>
            <person name="Wedler E."/>
            <person name="Peters S."/>
            <person name="van Staveren M."/>
            <person name="Dirkse W."/>
            <person name="Mooijman P."/>
            <person name="Klein Lankhorst R."/>
            <person name="Weitzenegger T."/>
            <person name="Bothe G."/>
            <person name="Rose M."/>
            <person name="Hauf J."/>
            <person name="Berneiser S."/>
            <person name="Hempel S."/>
            <person name="Feldpausch M."/>
            <person name="Lamberth S."/>
            <person name="Villarroel R."/>
            <person name="Gielen J."/>
            <person name="Ardiles W."/>
            <person name="Bents O."/>
            <person name="Lemcke K."/>
            <person name="Kolesov G."/>
            <person name="Mayer K.F.X."/>
            <person name="Rudd S."/>
            <person name="Schoof H."/>
            <person name="Schueller C."/>
            <person name="Zaccaria P."/>
            <person name="Mewes H.-W."/>
            <person name="Bevan M."/>
            <person name="Fransz P.F."/>
        </authorList>
    </citation>
    <scope>NUCLEOTIDE SEQUENCE [LARGE SCALE GENOMIC DNA]</scope>
    <source>
        <strain>cv. Columbia</strain>
    </source>
</reference>
<reference key="3">
    <citation type="journal article" date="2017" name="Plant J.">
        <title>Araport11: a complete reannotation of the Arabidopsis thaliana reference genome.</title>
        <authorList>
            <person name="Cheng C.Y."/>
            <person name="Krishnakumar V."/>
            <person name="Chan A.P."/>
            <person name="Thibaud-Nissen F."/>
            <person name="Schobel S."/>
            <person name="Town C.D."/>
        </authorList>
    </citation>
    <scope>GENOME REANNOTATION</scope>
    <source>
        <strain>cv. Columbia</strain>
    </source>
</reference>
<reference key="4">
    <citation type="journal article" date="2003" name="Science">
        <title>Empirical analysis of transcriptional activity in the Arabidopsis genome.</title>
        <authorList>
            <person name="Yamada K."/>
            <person name="Lim J."/>
            <person name="Dale J.M."/>
            <person name="Chen H."/>
            <person name="Shinn P."/>
            <person name="Palm C.J."/>
            <person name="Southwick A.M."/>
            <person name="Wu H.C."/>
            <person name="Kim C.J."/>
            <person name="Nguyen M."/>
            <person name="Pham P.K."/>
            <person name="Cheuk R.F."/>
            <person name="Karlin-Newmann G."/>
            <person name="Liu S.X."/>
            <person name="Lam B."/>
            <person name="Sakano H."/>
            <person name="Wu T."/>
            <person name="Yu G."/>
            <person name="Miranda M."/>
            <person name="Quach H.L."/>
            <person name="Tripp M."/>
            <person name="Chang C.H."/>
            <person name="Lee J.M."/>
            <person name="Toriumi M.J."/>
            <person name="Chan M.M."/>
            <person name="Tang C.C."/>
            <person name="Onodera C.S."/>
            <person name="Deng J.M."/>
            <person name="Akiyama K."/>
            <person name="Ansari Y."/>
            <person name="Arakawa T."/>
            <person name="Banh J."/>
            <person name="Banno F."/>
            <person name="Bowser L."/>
            <person name="Brooks S.Y."/>
            <person name="Carninci P."/>
            <person name="Chao Q."/>
            <person name="Choy N."/>
            <person name="Enju A."/>
            <person name="Goldsmith A.D."/>
            <person name="Gurjal M."/>
            <person name="Hansen N.F."/>
            <person name="Hayashizaki Y."/>
            <person name="Johnson-Hopson C."/>
            <person name="Hsuan V.W."/>
            <person name="Iida K."/>
            <person name="Karnes M."/>
            <person name="Khan S."/>
            <person name="Koesema E."/>
            <person name="Ishida J."/>
            <person name="Jiang P.X."/>
            <person name="Jones T."/>
            <person name="Kawai J."/>
            <person name="Kamiya A."/>
            <person name="Meyers C."/>
            <person name="Nakajima M."/>
            <person name="Narusaka M."/>
            <person name="Seki M."/>
            <person name="Sakurai T."/>
            <person name="Satou M."/>
            <person name="Tamse R."/>
            <person name="Vaysberg M."/>
            <person name="Wallender E.K."/>
            <person name="Wong C."/>
            <person name="Yamamura Y."/>
            <person name="Yuan S."/>
            <person name="Shinozaki K."/>
            <person name="Davis R.W."/>
            <person name="Theologis A."/>
            <person name="Ecker J.R."/>
        </authorList>
    </citation>
    <scope>NUCLEOTIDE SEQUENCE [LARGE SCALE MRNA]</scope>
    <source>
        <strain>cv. Columbia</strain>
    </source>
</reference>
<dbReference type="EMBL" id="AF083770">
    <property type="protein sequence ID" value="AAN60328.1"/>
    <property type="molecule type" value="mRNA"/>
</dbReference>
<dbReference type="EMBL" id="AC069326">
    <property type="status" value="NOT_ANNOTATED_CDS"/>
    <property type="molecule type" value="Genomic_DNA"/>
</dbReference>
<dbReference type="EMBL" id="CP002688">
    <property type="protein sequence ID" value="AED92674.1"/>
    <property type="molecule type" value="Genomic_DNA"/>
</dbReference>
<dbReference type="EMBL" id="BT004589">
    <property type="protein sequence ID" value="AAO42835.1"/>
    <property type="molecule type" value="mRNA"/>
</dbReference>
<dbReference type="RefSeq" id="NP_197425.1">
    <property type="nucleotide sequence ID" value="NM_121929.3"/>
</dbReference>
<dbReference type="SMR" id="Q84VZ5"/>
<dbReference type="BioGRID" id="17320">
    <property type="interactions" value="1"/>
</dbReference>
<dbReference type="FunCoup" id="Q84VZ5">
    <property type="interactions" value="8"/>
</dbReference>
<dbReference type="STRING" id="3702.Q84VZ5"/>
<dbReference type="GlyGen" id="Q84VZ5">
    <property type="glycosylation" value="4 sites"/>
</dbReference>
<dbReference type="PaxDb" id="3702-AT5G19240.1"/>
<dbReference type="ProteomicsDB" id="246392"/>
<dbReference type="EnsemblPlants" id="AT5G19240.1">
    <property type="protein sequence ID" value="AT5G19240.1"/>
    <property type="gene ID" value="AT5G19240"/>
</dbReference>
<dbReference type="GeneID" id="832044"/>
<dbReference type="Gramene" id="AT5G19240.1">
    <property type="protein sequence ID" value="AT5G19240.1"/>
    <property type="gene ID" value="AT5G19240"/>
</dbReference>
<dbReference type="KEGG" id="ath:AT5G19240"/>
<dbReference type="Araport" id="AT5G19240"/>
<dbReference type="TAIR" id="AT5G19240"/>
<dbReference type="eggNOG" id="ENOG502RYCU">
    <property type="taxonomic scope" value="Eukaryota"/>
</dbReference>
<dbReference type="HOGENOM" id="CLU_087436_1_0_1"/>
<dbReference type="InParanoid" id="Q84VZ5"/>
<dbReference type="PRO" id="PR:Q84VZ5"/>
<dbReference type="Proteomes" id="UP000006548">
    <property type="component" value="Chromosome 5"/>
</dbReference>
<dbReference type="ExpressionAtlas" id="Q84VZ5">
    <property type="expression patterns" value="baseline and differential"/>
</dbReference>
<dbReference type="GO" id="GO:0005886">
    <property type="term" value="C:plasma membrane"/>
    <property type="evidence" value="ECO:0007669"/>
    <property type="project" value="UniProtKB-SubCell"/>
</dbReference>
<dbReference type="GO" id="GO:0009536">
    <property type="term" value="C:plastid"/>
    <property type="evidence" value="ECO:0007005"/>
    <property type="project" value="TAIR"/>
</dbReference>
<dbReference type="GO" id="GO:0098552">
    <property type="term" value="C:side of membrane"/>
    <property type="evidence" value="ECO:0007669"/>
    <property type="project" value="UniProtKB-KW"/>
</dbReference>
<dbReference type="GO" id="GO:0071456">
    <property type="term" value="P:cellular response to hypoxia"/>
    <property type="evidence" value="ECO:0007007"/>
    <property type="project" value="TAIR"/>
</dbReference>
<dbReference type="InterPro" id="IPR045285">
    <property type="entry name" value="At5g19230-like"/>
</dbReference>
<dbReference type="PANTHER" id="PTHR33976:SF9">
    <property type="entry name" value="GPI-ANCHORED PROTEIN"/>
    <property type="match status" value="1"/>
</dbReference>
<dbReference type="PANTHER" id="PTHR33976">
    <property type="entry name" value="OS07G0645000 PROTEIN"/>
    <property type="match status" value="1"/>
</dbReference>
<keyword id="KW-1003">Cell membrane</keyword>
<keyword id="KW-0325">Glycoprotein</keyword>
<keyword id="KW-0336">GPI-anchor</keyword>
<keyword id="KW-0449">Lipoprotein</keyword>
<keyword id="KW-0472">Membrane</keyword>
<keyword id="KW-1185">Reference proteome</keyword>
<keyword id="KW-0732">Signal</keyword>
<organism>
    <name type="scientific">Arabidopsis thaliana</name>
    <name type="common">Mouse-ear cress</name>
    <dbReference type="NCBI Taxonomy" id="3702"/>
    <lineage>
        <taxon>Eukaryota</taxon>
        <taxon>Viridiplantae</taxon>
        <taxon>Streptophyta</taxon>
        <taxon>Embryophyta</taxon>
        <taxon>Tracheophyta</taxon>
        <taxon>Spermatophyta</taxon>
        <taxon>Magnoliopsida</taxon>
        <taxon>eudicotyledons</taxon>
        <taxon>Gunneridae</taxon>
        <taxon>Pentapetalae</taxon>
        <taxon>rosids</taxon>
        <taxon>malvids</taxon>
        <taxon>Brassicales</taxon>
        <taxon>Brassicaceae</taxon>
        <taxon>Camelineae</taxon>
        <taxon>Arabidopsis</taxon>
    </lineage>
</organism>
<evidence type="ECO:0000250" key="1"/>
<evidence type="ECO:0000255" key="2"/>
<evidence type="ECO:0000305" key="3"/>